<dbReference type="EMBL" id="AB085905">
    <property type="protein sequence ID" value="BAC92688.1"/>
    <property type="molecule type" value="mRNA"/>
</dbReference>
<dbReference type="EMBL" id="AL832322">
    <property type="protein sequence ID" value="CAD38617.1"/>
    <property type="molecule type" value="mRNA"/>
</dbReference>
<dbReference type="EMBL" id="AL834248">
    <property type="protein sequence ID" value="CAD38924.2"/>
    <property type="status" value="ALT_INIT"/>
    <property type="molecule type" value="mRNA"/>
</dbReference>
<dbReference type="EMBL" id="AL831988">
    <property type="protein sequence ID" value="CAD91140.1"/>
    <property type="status" value="ALT_INIT"/>
    <property type="molecule type" value="mRNA"/>
</dbReference>
<dbReference type="EMBL" id="BX647633">
    <property type="protein sequence ID" value="CAI45978.1"/>
    <property type="molecule type" value="mRNA"/>
</dbReference>
<dbReference type="EMBL" id="AL592434">
    <property type="status" value="NOT_ANNOTATED_CDS"/>
    <property type="molecule type" value="Genomic_DNA"/>
</dbReference>
<dbReference type="EMBL" id="AL158850">
    <property type="status" value="NOT_ANNOTATED_CDS"/>
    <property type="molecule type" value="Genomic_DNA"/>
</dbReference>
<dbReference type="EMBL" id="BC115383">
    <property type="protein sequence ID" value="AAI15384.1"/>
    <property type="molecule type" value="mRNA"/>
</dbReference>
<dbReference type="EMBL" id="BC115384">
    <property type="protein sequence ID" value="AAI15385.1"/>
    <property type="molecule type" value="mRNA"/>
</dbReference>
<dbReference type="CCDS" id="CCDS34545.1"/>
<dbReference type="RefSeq" id="NP_694967.3">
    <property type="nucleotide sequence ID" value="NM_153235.3"/>
</dbReference>
<dbReference type="RefSeq" id="XP_005266893.1">
    <property type="nucleotide sequence ID" value="XM_005266836.2"/>
</dbReference>
<dbReference type="RefSeq" id="XP_011533807.1">
    <property type="nucleotide sequence ID" value="XM_011535505.2"/>
</dbReference>
<dbReference type="RefSeq" id="XP_016865811.1">
    <property type="nucleotide sequence ID" value="XM_017010322.1"/>
</dbReference>
<dbReference type="RefSeq" id="XP_024302109.1">
    <property type="nucleotide sequence ID" value="XM_024446341.2"/>
</dbReference>
<dbReference type="RefSeq" id="XP_047274208.1">
    <property type="nucleotide sequence ID" value="XM_047418252.1"/>
</dbReference>
<dbReference type="RefSeq" id="XP_047274209.1">
    <property type="nucleotide sequence ID" value="XM_047418253.1"/>
</dbReference>
<dbReference type="SMR" id="Q8N3L3"/>
<dbReference type="BioGRID" id="127952">
    <property type="interactions" value="93"/>
</dbReference>
<dbReference type="FunCoup" id="Q8N3L3">
    <property type="interactions" value="732"/>
</dbReference>
<dbReference type="IntAct" id="Q8N3L3">
    <property type="interactions" value="88"/>
</dbReference>
<dbReference type="STRING" id="9606.ENSP00000351206"/>
<dbReference type="iPTMnet" id="Q8N3L3"/>
<dbReference type="PhosphoSitePlus" id="Q8N3L3"/>
<dbReference type="BioMuta" id="TXLNB"/>
<dbReference type="DMDM" id="55583953"/>
<dbReference type="jPOST" id="Q8N3L3"/>
<dbReference type="MassIVE" id="Q8N3L3"/>
<dbReference type="PaxDb" id="9606-ENSP00000351206"/>
<dbReference type="ProteomicsDB" id="71819"/>
<dbReference type="Antibodypedia" id="33084">
    <property type="antibodies" value="122 antibodies from 17 providers"/>
</dbReference>
<dbReference type="DNASU" id="167838"/>
<dbReference type="Ensembl" id="ENST00000358430.8">
    <property type="protein sequence ID" value="ENSP00000351206.3"/>
    <property type="gene ID" value="ENSG00000164440.16"/>
</dbReference>
<dbReference type="GeneID" id="167838"/>
<dbReference type="KEGG" id="hsa:167838"/>
<dbReference type="MANE-Select" id="ENST00000358430.8">
    <property type="protein sequence ID" value="ENSP00000351206.3"/>
    <property type="RefSeq nucleotide sequence ID" value="NM_153235.4"/>
    <property type="RefSeq protein sequence ID" value="NP_694967.3"/>
</dbReference>
<dbReference type="UCSC" id="uc063rxd.1">
    <property type="organism name" value="human"/>
</dbReference>
<dbReference type="AGR" id="HGNC:21617"/>
<dbReference type="CTD" id="167838"/>
<dbReference type="DisGeNET" id="167838"/>
<dbReference type="GeneCards" id="TXLNB"/>
<dbReference type="HGNC" id="HGNC:21617">
    <property type="gene designation" value="TXLNB"/>
</dbReference>
<dbReference type="HPA" id="ENSG00000164440">
    <property type="expression patterns" value="Group enriched (heart muscle, skeletal muscle, tongue)"/>
</dbReference>
<dbReference type="MIM" id="611438">
    <property type="type" value="gene"/>
</dbReference>
<dbReference type="neXtProt" id="NX_Q8N3L3"/>
<dbReference type="OpenTargets" id="ENSG00000164440"/>
<dbReference type="PharmGKB" id="PA134878600"/>
<dbReference type="VEuPathDB" id="HostDB:ENSG00000164440"/>
<dbReference type="eggNOG" id="KOG1850">
    <property type="taxonomic scope" value="Eukaryota"/>
</dbReference>
<dbReference type="GeneTree" id="ENSGT00940000157418"/>
<dbReference type="HOGENOM" id="CLU_025501_2_0_1"/>
<dbReference type="InParanoid" id="Q8N3L3"/>
<dbReference type="OMA" id="SPKMEAN"/>
<dbReference type="OrthoDB" id="425555at2759"/>
<dbReference type="PAN-GO" id="Q8N3L3">
    <property type="GO annotations" value="0 GO annotations based on evolutionary models"/>
</dbReference>
<dbReference type="PhylomeDB" id="Q8N3L3"/>
<dbReference type="TreeFam" id="TF318595"/>
<dbReference type="PathwayCommons" id="Q8N3L3"/>
<dbReference type="SignaLink" id="Q8N3L3"/>
<dbReference type="BioGRID-ORCS" id="167838">
    <property type="hits" value="9 hits in 1142 CRISPR screens"/>
</dbReference>
<dbReference type="ChiTaRS" id="TXLNB">
    <property type="organism name" value="human"/>
</dbReference>
<dbReference type="GeneWiki" id="TXLNB"/>
<dbReference type="GenomeRNAi" id="167838"/>
<dbReference type="Pharos" id="Q8N3L3">
    <property type="development level" value="Tbio"/>
</dbReference>
<dbReference type="PRO" id="PR:Q8N3L3"/>
<dbReference type="Proteomes" id="UP000005640">
    <property type="component" value="Chromosome 6"/>
</dbReference>
<dbReference type="RNAct" id="Q8N3L3">
    <property type="molecule type" value="protein"/>
</dbReference>
<dbReference type="Bgee" id="ENSG00000164440">
    <property type="expression patterns" value="Expressed in vastus lateralis and 125 other cell types or tissues"/>
</dbReference>
<dbReference type="ExpressionAtlas" id="Q8N3L3">
    <property type="expression patterns" value="baseline and differential"/>
</dbReference>
<dbReference type="GO" id="GO:0005737">
    <property type="term" value="C:cytoplasm"/>
    <property type="evidence" value="ECO:0000314"/>
    <property type="project" value="LIFEdb"/>
</dbReference>
<dbReference type="GO" id="GO:0019905">
    <property type="term" value="F:syntaxin binding"/>
    <property type="evidence" value="ECO:0007669"/>
    <property type="project" value="InterPro"/>
</dbReference>
<dbReference type="InterPro" id="IPR026183">
    <property type="entry name" value="Taxilin_fam"/>
</dbReference>
<dbReference type="PANTHER" id="PTHR16127:SF10">
    <property type="entry name" value="BETA-TAXILIN"/>
    <property type="match status" value="1"/>
</dbReference>
<dbReference type="PANTHER" id="PTHR16127">
    <property type="entry name" value="TAXILIN"/>
    <property type="match status" value="1"/>
</dbReference>
<dbReference type="Pfam" id="PF09728">
    <property type="entry name" value="Taxilin"/>
    <property type="match status" value="1"/>
</dbReference>
<proteinExistence type="evidence at protein level"/>
<organism>
    <name type="scientific">Homo sapiens</name>
    <name type="common">Human</name>
    <dbReference type="NCBI Taxonomy" id="9606"/>
    <lineage>
        <taxon>Eukaryota</taxon>
        <taxon>Metazoa</taxon>
        <taxon>Chordata</taxon>
        <taxon>Craniata</taxon>
        <taxon>Vertebrata</taxon>
        <taxon>Euteleostomi</taxon>
        <taxon>Mammalia</taxon>
        <taxon>Eutheria</taxon>
        <taxon>Euarchontoglires</taxon>
        <taxon>Primates</taxon>
        <taxon>Haplorrhini</taxon>
        <taxon>Catarrhini</taxon>
        <taxon>Hominidae</taxon>
        <taxon>Homo</taxon>
    </lineage>
</organism>
<reference key="1">
    <citation type="journal article" date="2004" name="Neurosci. Lett.">
        <title>Muscle-specific protein MDP77 specifically promotes motor nerve regeneration in rats.</title>
        <authorList>
            <person name="Itoh S."/>
            <person name="Uyeda A."/>
            <person name="Hukuoka Y."/>
            <person name="Fujimori K.E."/>
            <person name="Matsuda A."/>
            <person name="Ichinose S."/>
            <person name="Kobayashi H."/>
            <person name="Shinomiya K."/>
            <person name="Tanaka J."/>
            <person name="Taguchi T."/>
        </authorList>
    </citation>
    <scope>NUCLEOTIDE SEQUENCE [MRNA]</scope>
    <source>
        <tissue>Skeletal muscle</tissue>
    </source>
</reference>
<reference key="2">
    <citation type="journal article" date="2007" name="BMC Genomics">
        <title>The full-ORF clone resource of the German cDNA consortium.</title>
        <authorList>
            <person name="Bechtel S."/>
            <person name="Rosenfelder H."/>
            <person name="Duda A."/>
            <person name="Schmidt C.P."/>
            <person name="Ernst U."/>
            <person name="Wellenreuther R."/>
            <person name="Mehrle A."/>
            <person name="Schuster C."/>
            <person name="Bahr A."/>
            <person name="Bloecker H."/>
            <person name="Heubner D."/>
            <person name="Hoerlein A."/>
            <person name="Michel G."/>
            <person name="Wedler H."/>
            <person name="Koehrer K."/>
            <person name="Ottenwaelder B."/>
            <person name="Poustka A."/>
            <person name="Wiemann S."/>
            <person name="Schupp I."/>
        </authorList>
    </citation>
    <scope>NUCLEOTIDE SEQUENCE [LARGE SCALE MRNA]</scope>
    <scope>VARIANTS MET-348 AND PRO-602</scope>
    <source>
        <tissue>Skeletal muscle</tissue>
    </source>
</reference>
<reference key="3">
    <citation type="journal article" date="2003" name="Nature">
        <title>The DNA sequence and analysis of human chromosome 6.</title>
        <authorList>
            <person name="Mungall A.J."/>
            <person name="Palmer S.A."/>
            <person name="Sims S.K."/>
            <person name="Edwards C.A."/>
            <person name="Ashurst J.L."/>
            <person name="Wilming L."/>
            <person name="Jones M.C."/>
            <person name="Horton R."/>
            <person name="Hunt S.E."/>
            <person name="Scott C.E."/>
            <person name="Gilbert J.G.R."/>
            <person name="Clamp M.E."/>
            <person name="Bethel G."/>
            <person name="Milne S."/>
            <person name="Ainscough R."/>
            <person name="Almeida J.P."/>
            <person name="Ambrose K.D."/>
            <person name="Andrews T.D."/>
            <person name="Ashwell R.I.S."/>
            <person name="Babbage A.K."/>
            <person name="Bagguley C.L."/>
            <person name="Bailey J."/>
            <person name="Banerjee R."/>
            <person name="Barker D.J."/>
            <person name="Barlow K.F."/>
            <person name="Bates K."/>
            <person name="Beare D.M."/>
            <person name="Beasley H."/>
            <person name="Beasley O."/>
            <person name="Bird C.P."/>
            <person name="Blakey S.E."/>
            <person name="Bray-Allen S."/>
            <person name="Brook J."/>
            <person name="Brown A.J."/>
            <person name="Brown J.Y."/>
            <person name="Burford D.C."/>
            <person name="Burrill W."/>
            <person name="Burton J."/>
            <person name="Carder C."/>
            <person name="Carter N.P."/>
            <person name="Chapman J.C."/>
            <person name="Clark S.Y."/>
            <person name="Clark G."/>
            <person name="Clee C.M."/>
            <person name="Clegg S."/>
            <person name="Cobley V."/>
            <person name="Collier R.E."/>
            <person name="Collins J.E."/>
            <person name="Colman L.K."/>
            <person name="Corby N.R."/>
            <person name="Coville G.J."/>
            <person name="Culley K.M."/>
            <person name="Dhami P."/>
            <person name="Davies J."/>
            <person name="Dunn M."/>
            <person name="Earthrowl M.E."/>
            <person name="Ellington A.E."/>
            <person name="Evans K.A."/>
            <person name="Faulkner L."/>
            <person name="Francis M.D."/>
            <person name="Frankish A."/>
            <person name="Frankland J."/>
            <person name="French L."/>
            <person name="Garner P."/>
            <person name="Garnett J."/>
            <person name="Ghori M.J."/>
            <person name="Gilby L.M."/>
            <person name="Gillson C.J."/>
            <person name="Glithero R.J."/>
            <person name="Grafham D.V."/>
            <person name="Grant M."/>
            <person name="Gribble S."/>
            <person name="Griffiths C."/>
            <person name="Griffiths M.N.D."/>
            <person name="Hall R."/>
            <person name="Halls K.S."/>
            <person name="Hammond S."/>
            <person name="Harley J.L."/>
            <person name="Hart E.A."/>
            <person name="Heath P.D."/>
            <person name="Heathcott R."/>
            <person name="Holmes S.J."/>
            <person name="Howden P.J."/>
            <person name="Howe K.L."/>
            <person name="Howell G.R."/>
            <person name="Huckle E."/>
            <person name="Humphray S.J."/>
            <person name="Humphries M.D."/>
            <person name="Hunt A.R."/>
            <person name="Johnson C.M."/>
            <person name="Joy A.A."/>
            <person name="Kay M."/>
            <person name="Keenan S.J."/>
            <person name="Kimberley A.M."/>
            <person name="King A."/>
            <person name="Laird G.K."/>
            <person name="Langford C."/>
            <person name="Lawlor S."/>
            <person name="Leongamornlert D.A."/>
            <person name="Leversha M."/>
            <person name="Lloyd C.R."/>
            <person name="Lloyd D.M."/>
            <person name="Loveland J.E."/>
            <person name="Lovell J."/>
            <person name="Martin S."/>
            <person name="Mashreghi-Mohammadi M."/>
            <person name="Maslen G.L."/>
            <person name="Matthews L."/>
            <person name="McCann O.T."/>
            <person name="McLaren S.J."/>
            <person name="McLay K."/>
            <person name="McMurray A."/>
            <person name="Moore M.J.F."/>
            <person name="Mullikin J.C."/>
            <person name="Niblett D."/>
            <person name="Nickerson T."/>
            <person name="Novik K.L."/>
            <person name="Oliver K."/>
            <person name="Overton-Larty E.K."/>
            <person name="Parker A."/>
            <person name="Patel R."/>
            <person name="Pearce A.V."/>
            <person name="Peck A.I."/>
            <person name="Phillimore B.J.C.T."/>
            <person name="Phillips S."/>
            <person name="Plumb R.W."/>
            <person name="Porter K.M."/>
            <person name="Ramsey Y."/>
            <person name="Ranby S.A."/>
            <person name="Rice C.M."/>
            <person name="Ross M.T."/>
            <person name="Searle S.M."/>
            <person name="Sehra H.K."/>
            <person name="Sheridan E."/>
            <person name="Skuce C.D."/>
            <person name="Smith S."/>
            <person name="Smith M."/>
            <person name="Spraggon L."/>
            <person name="Squares S.L."/>
            <person name="Steward C.A."/>
            <person name="Sycamore N."/>
            <person name="Tamlyn-Hall G."/>
            <person name="Tester J."/>
            <person name="Theaker A.J."/>
            <person name="Thomas D.W."/>
            <person name="Thorpe A."/>
            <person name="Tracey A."/>
            <person name="Tromans A."/>
            <person name="Tubby B."/>
            <person name="Wall M."/>
            <person name="Wallis J.M."/>
            <person name="West A.P."/>
            <person name="White S.S."/>
            <person name="Whitehead S.L."/>
            <person name="Whittaker H."/>
            <person name="Wild A."/>
            <person name="Willey D.J."/>
            <person name="Wilmer T.E."/>
            <person name="Wood J.M."/>
            <person name="Wray P.W."/>
            <person name="Wyatt J.C."/>
            <person name="Young L."/>
            <person name="Younger R.M."/>
            <person name="Bentley D.R."/>
            <person name="Coulson A."/>
            <person name="Durbin R.M."/>
            <person name="Hubbard T."/>
            <person name="Sulston J.E."/>
            <person name="Dunham I."/>
            <person name="Rogers J."/>
            <person name="Beck S."/>
        </authorList>
    </citation>
    <scope>NUCLEOTIDE SEQUENCE [LARGE SCALE GENOMIC DNA]</scope>
</reference>
<reference key="4">
    <citation type="journal article" date="2004" name="Genome Res.">
        <title>The status, quality, and expansion of the NIH full-length cDNA project: the Mammalian Gene Collection (MGC).</title>
        <authorList>
            <consortium name="The MGC Project Team"/>
        </authorList>
    </citation>
    <scope>NUCLEOTIDE SEQUENCE [LARGE SCALE MRNA]</scope>
    <scope>VARIANTS MET-348 AND PRO-602</scope>
</reference>
<reference key="5">
    <citation type="journal article" date="2004" name="Biochem. Biophys. Res. Commun.">
        <title>Identification and characterization of taxilin isoforms.</title>
        <authorList>
            <person name="Nogami S."/>
            <person name="Satoh S."/>
            <person name="Tanaka-Nakadate S."/>
            <person name="Yoshida K."/>
            <person name="Nakano M."/>
            <person name="Terano A."/>
            <person name="Shirataki H."/>
        </authorList>
    </citation>
    <scope>INTERACTION WITH STX1A; STX3A AND STX4A</scope>
</reference>
<sequence>MEANHSEQLSAERQSTPPGDSSSLPSHNGLEKEDGQDSPTPVQPPEKEASVHPDISEELNRQLEDIINTYGSAASTAGKEGSARASEQPENAESPDNEDGDCEETTEEAGREPVASGEPPTVKEPVSNKEQKLEKKILKGLGKEANLLMQNLNKLQTPEEKFDFLFKKYAELLDEHRTEQKKLKLLQKKQVQIQKEKDQLQGEHSRAILARSKLESLCRELQRHNKTLKEEALQRAREEEEKRKEITSHFQSTLTDIQGQIEQQSERNMKLCQENTELAEKLKSIIDQYELREEHLDKIFKHRELQQKLVDAKLEQAQEMMKEAEERHKREKEYLLNQAAEWKLQAKVLKEQETVLQAQLTLYSGRFEEFQSTLTKSNEVFATFKQEMDKTTKKMKKLEKDTATWKARFENCNKALLDMIEEKALRAKEYECFVMKIGRLENLCRALQEERNELHKKIRDAEISEKDDQSQHNSDEEPESNVSVDQEIDAEEVNSVQTAVKNLATAFMIIHHPESTPHQSKETQPEIGSSQESADAALKEPEQPPLIPSRDSESPLPPLTPQAEAEGGSDAEPPSKASNSPAGLGAETQCEGLPVGAQADQASWKPEAEASGQAPQAPTEASLQKMEADVPAPACAAEEHVAAMVPACEPSRQPPRAAAEELPVGASAGPQPRNVADTNLEGVD</sequence>
<gene>
    <name type="primary">TXLNB</name>
    <name type="synonym">C6orf198</name>
    <name type="synonym">MDP77</name>
</gene>
<accession>Q8N3L3</accession>
<accession>Q5HYH7</accession>
<accession>Q5VTF3</accession>
<accession>Q76L25</accession>
<accession>Q86T52</accession>
<accession>Q8N3S2</accession>
<feature type="chain" id="PRO_0000189423" description="Beta-taxilin">
    <location>
        <begin position="1"/>
        <end position="684"/>
    </location>
</feature>
<feature type="region of interest" description="Disordered" evidence="4">
    <location>
        <begin position="1"/>
        <end position="132"/>
    </location>
</feature>
<feature type="region of interest" description="Disordered" evidence="4">
    <location>
        <begin position="458"/>
        <end position="485"/>
    </location>
</feature>
<feature type="region of interest" description="Disordered" evidence="4">
    <location>
        <begin position="514"/>
        <end position="632"/>
    </location>
</feature>
<feature type="region of interest" description="Disordered" evidence="4">
    <location>
        <begin position="646"/>
        <end position="684"/>
    </location>
</feature>
<feature type="coiled-coil region" evidence="3">
    <location>
        <begin position="135"/>
        <end position="351"/>
    </location>
</feature>
<feature type="coiled-coil region" evidence="3">
    <location>
        <begin position="378"/>
        <end position="467"/>
    </location>
</feature>
<feature type="compositionally biased region" description="Polar residues" evidence="4">
    <location>
        <begin position="1"/>
        <end position="26"/>
    </location>
</feature>
<feature type="compositionally biased region" description="Basic and acidic residues" evidence="4">
    <location>
        <begin position="45"/>
        <end position="64"/>
    </location>
</feature>
<feature type="compositionally biased region" description="Acidic residues" evidence="4">
    <location>
        <begin position="93"/>
        <end position="107"/>
    </location>
</feature>
<feature type="compositionally biased region" description="Basic and acidic residues" evidence="4">
    <location>
        <begin position="458"/>
        <end position="475"/>
    </location>
</feature>
<feature type="compositionally biased region" description="Basic and acidic residues" evidence="4">
    <location>
        <begin position="514"/>
        <end position="524"/>
    </location>
</feature>
<feature type="compositionally biased region" description="Polar residues" evidence="4">
    <location>
        <begin position="613"/>
        <end position="622"/>
    </location>
</feature>
<feature type="modified residue" description="Phosphoserine" evidence="2">
    <location>
        <position position="474"/>
    </location>
</feature>
<feature type="modified residue" description="Phosphoserine" evidence="2">
    <location>
        <position position="483"/>
    </location>
</feature>
<feature type="sequence variant" id="VAR_019807" description="In dbSNP:rs9321712.">
    <original>A</original>
    <variation>T</variation>
    <location>
        <position position="11"/>
    </location>
</feature>
<feature type="sequence variant" id="VAR_057729" description="In dbSNP:rs17068451." evidence="5 6">
    <original>V</original>
    <variation>M</variation>
    <location>
        <position position="348"/>
    </location>
</feature>
<feature type="sequence variant" id="VAR_057730" description="In dbSNP:rs9495392.">
    <original>I</original>
    <variation>T</variation>
    <location>
        <position position="527"/>
    </location>
</feature>
<feature type="sequence variant" id="VAR_057731" description="In dbSNP:rs9495391." evidence="5 6">
    <original>A</original>
    <variation>P</variation>
    <location>
        <position position="602"/>
    </location>
</feature>
<feature type="sequence conflict" description="In Ref. 2; CAD38617." evidence="7" ref="2">
    <original>K</original>
    <variation>E</variation>
    <location>
        <position position="270"/>
    </location>
</feature>
<feature type="sequence conflict" description="In Ref. 2; CAD91140." evidence="7" ref="2">
    <original>A</original>
    <variation>T</variation>
    <location>
        <position position="597"/>
    </location>
</feature>
<protein>
    <recommendedName>
        <fullName>Beta-taxilin</fullName>
    </recommendedName>
    <alternativeName>
        <fullName>Muscle-derived protein 77</fullName>
        <shortName>hMDP77</shortName>
    </alternativeName>
</protein>
<keyword id="KW-0175">Coiled coil</keyword>
<keyword id="KW-0597">Phosphoprotein</keyword>
<keyword id="KW-1267">Proteomics identification</keyword>
<keyword id="KW-1185">Reference proteome</keyword>
<name>TXLNB_HUMAN</name>
<evidence type="ECO:0000250" key="1"/>
<evidence type="ECO:0000250" key="2">
    <source>
        <dbReference type="UniProtKB" id="Q8VBT1"/>
    </source>
</evidence>
<evidence type="ECO:0000255" key="3"/>
<evidence type="ECO:0000256" key="4">
    <source>
        <dbReference type="SAM" id="MobiDB-lite"/>
    </source>
</evidence>
<evidence type="ECO:0000269" key="5">
    <source>
    </source>
</evidence>
<evidence type="ECO:0000269" key="6">
    <source>
    </source>
</evidence>
<evidence type="ECO:0000305" key="7"/>
<comment type="function">
    <text evidence="1">Promotes motor nerve regeneration (By similarity). May be involved in intracellular vesicle traffic.</text>
</comment>
<comment type="subunit">
    <text>Binds to the C-terminal coiled coil region of syntaxin family members STX1A, STX3A and STX4A. Has a preference for STX1A.</text>
</comment>
<comment type="interaction">
    <interactant intactId="EBI-6116822">
        <id>Q8N3L3</id>
    </interactant>
    <interactant intactId="EBI-4400025">
        <id>Q9Y2T1</id>
        <label>AXIN2</label>
    </interactant>
    <organismsDiffer>false</organismsDiffer>
    <experiments>3</experiments>
</comment>
<comment type="interaction">
    <interactant intactId="EBI-6116822">
        <id>Q8N3L3</id>
    </interactant>
    <interactant intactId="EBI-1054687">
        <id>P20290</id>
        <label>BTF3</label>
    </interactant>
    <organismsDiffer>false</organismsDiffer>
    <experiments>3</experiments>
</comment>
<comment type="interaction">
    <interactant intactId="EBI-6116822">
        <id>Q8N3L3</id>
    </interactant>
    <interactant intactId="EBI-6137496">
        <id>Q96K17</id>
        <label>BTF3L4</label>
    </interactant>
    <organismsDiffer>false</organismsDiffer>
    <experiments>3</experiments>
</comment>
<comment type="interaction">
    <interactant intactId="EBI-6116822">
        <id>Q8N3L3</id>
    </interactant>
    <interactant intactId="EBI-10196469">
        <id>Q8TC20</id>
        <label>CAGE1</label>
    </interactant>
    <organismsDiffer>false</organismsDiffer>
    <experiments>3</experiments>
</comment>
<comment type="interaction">
    <interactant intactId="EBI-6116822">
        <id>Q8N3L3</id>
    </interactant>
    <interactant intactId="EBI-741724">
        <id>Q8NA61</id>
        <label>CBY2</label>
    </interactant>
    <organismsDiffer>false</organismsDiffer>
    <experiments>3</experiments>
</comment>
<comment type="interaction">
    <interactant intactId="EBI-6116822">
        <id>Q8N3L3</id>
    </interactant>
    <interactant intactId="EBI-10961312">
        <id>Q8IYE1</id>
        <label>CCDC13</label>
    </interactant>
    <organismsDiffer>false</organismsDiffer>
    <experiments>3</experiments>
</comment>
<comment type="interaction">
    <interactant intactId="EBI-6116822">
        <id>Q8N3L3</id>
    </interactant>
    <interactant intactId="EBI-12105646">
        <id>Q49A88-3</id>
        <label>CCDC14</label>
    </interactant>
    <organismsDiffer>false</organismsDiffer>
    <experiments>3</experiments>
</comment>
<comment type="interaction">
    <interactant intactId="EBI-6116822">
        <id>Q8N3L3</id>
    </interactant>
    <interactant intactId="EBI-18398007">
        <id>Q4G0S7</id>
        <label>CCDC152</label>
    </interactant>
    <organismsDiffer>false</organismsDiffer>
    <experiments>3</experiments>
</comment>
<comment type="interaction">
    <interactant intactId="EBI-6116822">
        <id>Q8N3L3</id>
    </interactant>
    <interactant intactId="EBI-10181422">
        <id>A0A1B0GWI1</id>
        <label>CCDC196</label>
    </interactant>
    <organismsDiffer>false</organismsDiffer>
    <experiments>6</experiments>
</comment>
<comment type="interaction">
    <interactant intactId="EBI-6116822">
        <id>Q8N3L3</id>
    </interactant>
    <interactant intactId="EBI-347573">
        <id>A6NC98</id>
        <label>CCDC88B</label>
    </interactant>
    <organismsDiffer>false</organismsDiffer>
    <experiments>3</experiments>
</comment>
<comment type="interaction">
    <interactant intactId="EBI-6116822">
        <id>Q8N3L3</id>
    </interactant>
    <interactant intactId="EBI-10175300">
        <id>Q8TD31-3</id>
        <label>CCHCR1</label>
    </interactant>
    <organismsDiffer>false</organismsDiffer>
    <experiments>6</experiments>
</comment>
<comment type="interaction">
    <interactant intactId="EBI-6116822">
        <id>Q8N3L3</id>
    </interactant>
    <interactant intactId="EBI-1181367">
        <id>Q01850</id>
        <label>CDR2</label>
    </interactant>
    <organismsDiffer>false</organismsDiffer>
    <experiments>3</experiments>
</comment>
<comment type="interaction">
    <interactant intactId="EBI-6116822">
        <id>Q8N3L3</id>
    </interactant>
    <interactant intactId="EBI-741885">
        <id>Q96LK0</id>
        <label>CEP19</label>
    </interactant>
    <organismsDiffer>false</organismsDiffer>
    <experiments>3</experiments>
</comment>
<comment type="interaction">
    <interactant intactId="EBI-6116822">
        <id>Q8N3L3</id>
    </interactant>
    <interactant intactId="EBI-11752486">
        <id>Q86XR8-3</id>
        <label>CEP57</label>
    </interactant>
    <organismsDiffer>false</organismsDiffer>
    <experiments>3</experiments>
</comment>
<comment type="interaction">
    <interactant intactId="EBI-6116822">
        <id>Q8N3L3</id>
    </interactant>
    <interactant intactId="EBI-1104570">
        <id>Q8IYX8</id>
        <label>CEP57L1</label>
    </interactant>
    <organismsDiffer>false</organismsDiffer>
    <experiments>3</experiments>
</comment>
<comment type="interaction">
    <interactant intactId="EBI-6116822">
        <id>Q8N3L3</id>
    </interactant>
    <interactant intactId="EBI-10181988">
        <id>Q8IYX8-2</id>
        <label>CEP57L1</label>
    </interactant>
    <organismsDiffer>false</organismsDiffer>
    <experiments>3</experiments>
</comment>
<comment type="interaction">
    <interactant intactId="EBI-6116822">
        <id>Q8N3L3</id>
    </interactant>
    <interactant intactId="EBI-741977">
        <id>Q96MT8</id>
        <label>CEP63</label>
    </interactant>
    <organismsDiffer>false</organismsDiffer>
    <experiments>4</experiments>
</comment>
<comment type="interaction">
    <interactant intactId="EBI-6116822">
        <id>Q8N3L3</id>
    </interactant>
    <interactant intactId="EBI-11522539">
        <id>Q96MT8-3</id>
        <label>CEP63</label>
    </interactant>
    <organismsDiffer>false</organismsDiffer>
    <experiments>3</experiments>
</comment>
<comment type="interaction">
    <interactant intactId="EBI-6116822">
        <id>Q8N3L3</id>
    </interactant>
    <interactant intactId="EBI-739624">
        <id>Q8NHQ1</id>
        <label>CEP70</label>
    </interactant>
    <organismsDiffer>false</organismsDiffer>
    <experiments>8</experiments>
</comment>
<comment type="interaction">
    <interactant intactId="EBI-6116822">
        <id>Q8N3L3</id>
    </interactant>
    <interactant intactId="EBI-742422">
        <id>Q96M91</id>
        <label>CFAP53</label>
    </interactant>
    <organismsDiffer>false</organismsDiffer>
    <experiments>3</experiments>
</comment>
<comment type="interaction">
    <interactant intactId="EBI-6116822">
        <id>Q8N3L3</id>
    </interactant>
    <interactant intactId="EBI-6873363">
        <id>Q8WUE5</id>
        <label>CT55</label>
    </interactant>
    <organismsDiffer>false</organismsDiffer>
    <experiments>4</experiments>
</comment>
<comment type="interaction">
    <interactant intactId="EBI-6116822">
        <id>Q8N3L3</id>
    </interactant>
    <interactant intactId="EBI-715074">
        <id>Q13561</id>
        <label>DCTN2</label>
    </interactant>
    <organismsDiffer>false</organismsDiffer>
    <experiments>3</experiments>
</comment>
<comment type="interaction">
    <interactant intactId="EBI-6116822">
        <id>Q8N3L3</id>
    </interactant>
    <interactant intactId="EBI-748597">
        <id>Q05D60</id>
        <label>DEUP1</label>
    </interactant>
    <organismsDiffer>false</organismsDiffer>
    <experiments>11</experiments>
</comment>
<comment type="interaction">
    <interactant intactId="EBI-6116822">
        <id>Q8N3L3</id>
    </interactant>
    <interactant intactId="EBI-399105">
        <id>Q9NPF5</id>
        <label>DMAP1</label>
    </interactant>
    <organismsDiffer>false</organismsDiffer>
    <experiments>3</experiments>
</comment>
<comment type="interaction">
    <interactant intactId="EBI-6116822">
        <id>Q8N3L3</id>
    </interactant>
    <interactant intactId="EBI-465804">
        <id>Q96EV8</id>
        <label>DTNBP1</label>
    </interactant>
    <organismsDiffer>false</organismsDiffer>
    <experiments>6</experiments>
</comment>
<comment type="interaction">
    <interactant intactId="EBI-6116822">
        <id>Q8N3L3</id>
    </interactant>
    <interactant intactId="EBI-740680">
        <id>Q8WWB3</id>
        <label>DYDC1</label>
    </interactant>
    <organismsDiffer>false</organismsDiffer>
    <experiments>6</experiments>
</comment>
<comment type="interaction">
    <interactant intactId="EBI-6116822">
        <id>Q8N3L3</id>
    </interactant>
    <interactant intactId="EBI-949824">
        <id>O00471</id>
        <label>EXOC5</label>
    </interactant>
    <organismsDiffer>false</organismsDiffer>
    <experiments>4</experiments>
</comment>
<comment type="interaction">
    <interactant intactId="EBI-6116822">
        <id>Q8N3L3</id>
    </interactant>
    <interactant intactId="EBI-719941">
        <id>Q3B820</id>
        <label>FAM161A</label>
    </interactant>
    <organismsDiffer>false</organismsDiffer>
    <experiments>3</experiments>
</comment>
<comment type="interaction">
    <interactant intactId="EBI-6116822">
        <id>Q8N3L3</id>
    </interactant>
    <interactant intactId="EBI-10290462">
        <id>Q96KS9</id>
        <label>FAM167A</label>
    </interactant>
    <organismsDiffer>false</organismsDiffer>
    <experiments>3</experiments>
</comment>
<comment type="interaction">
    <interactant intactId="EBI-6116822">
        <id>Q8N3L3</id>
    </interactant>
    <interactant intactId="EBI-1052570">
        <id>O95995</id>
        <label>GAS8</label>
    </interactant>
    <organismsDiffer>false</organismsDiffer>
    <experiments>3</experiments>
</comment>
<comment type="interaction">
    <interactant intactId="EBI-6116822">
        <id>Q8N3L3</id>
    </interactant>
    <interactant intactId="EBI-618309">
        <id>Q08379</id>
        <label>GOLGA2</label>
    </interactant>
    <organismsDiffer>false</organismsDiffer>
    <experiments>3</experiments>
</comment>
<comment type="interaction">
    <interactant intactId="EBI-6116822">
        <id>Q8N3L3</id>
    </interactant>
    <interactant intactId="EBI-2558217">
        <id>Q68CZ6</id>
        <label>HAUS3</label>
    </interactant>
    <organismsDiffer>false</organismsDiffer>
    <experiments>3</experiments>
</comment>
<comment type="interaction">
    <interactant intactId="EBI-6116822">
        <id>Q8N3L3</id>
    </interactant>
    <interactant intactId="EBI-3437878">
        <id>Q86T90</id>
        <label>KIAA1328</label>
    </interactant>
    <organismsDiffer>false</organismsDiffer>
    <experiments>3</experiments>
</comment>
<comment type="interaction">
    <interactant intactId="EBI-6116822">
        <id>Q8N3L3</id>
    </interactant>
    <interactant intactId="EBI-1223876">
        <id>P13646</id>
        <label>KRT13</label>
    </interactant>
    <organismsDiffer>false</organismsDiffer>
    <experiments>3</experiments>
</comment>
<comment type="interaction">
    <interactant intactId="EBI-6116822">
        <id>Q8N3L3</id>
    </interactant>
    <interactant intactId="EBI-739566">
        <id>P19012</id>
        <label>KRT15</label>
    </interactant>
    <organismsDiffer>false</organismsDiffer>
    <experiments>6</experiments>
</comment>
<comment type="interaction">
    <interactant intactId="EBI-6116822">
        <id>Q8N3L3</id>
    </interactant>
    <interactant intactId="EBI-356410">
        <id>P08779</id>
        <label>KRT16</label>
    </interactant>
    <organismsDiffer>false</organismsDiffer>
    <experiments>3</experiments>
</comment>
<comment type="interaction">
    <interactant intactId="EBI-6116822">
        <id>Q8N3L3</id>
    </interactant>
    <interactant intactId="EBI-12084444">
        <id>Q7Z3Y9</id>
        <label>KRT26</label>
    </interactant>
    <organismsDiffer>false</organismsDiffer>
    <experiments>3</experiments>
</comment>
<comment type="interaction">
    <interactant intactId="EBI-6116822">
        <id>Q8N3L3</id>
    </interactant>
    <interactant intactId="EBI-3044087">
        <id>Q7Z3Y8</id>
        <label>KRT27</label>
    </interactant>
    <organismsDiffer>false</organismsDiffer>
    <experiments>3</experiments>
</comment>
<comment type="interaction">
    <interactant intactId="EBI-6116822">
        <id>Q8N3L3</id>
    </interactant>
    <interactant intactId="EBI-1047093">
        <id>O76011</id>
        <label>KRT34</label>
    </interactant>
    <organismsDiffer>false</organismsDiffer>
    <experiments>3</experiments>
</comment>
<comment type="interaction">
    <interactant intactId="EBI-6116822">
        <id>Q8N3L3</id>
    </interactant>
    <interactant intactId="EBI-1058674">
        <id>Q92764</id>
        <label>KRT35</label>
    </interactant>
    <organismsDiffer>false</organismsDiffer>
    <experiments>3</experiments>
</comment>
<comment type="interaction">
    <interactant intactId="EBI-6116822">
        <id>Q8N3L3</id>
    </interactant>
    <interactant intactId="EBI-1045716">
        <id>O76014</id>
        <label>KRT37</label>
    </interactant>
    <organismsDiffer>false</organismsDiffer>
    <experiments>3</experiments>
</comment>
<comment type="interaction">
    <interactant intactId="EBI-6116822">
        <id>Q8N3L3</id>
    </interactant>
    <interactant intactId="EBI-1047263">
        <id>O76015</id>
        <label>KRT38</label>
    </interactant>
    <organismsDiffer>false</organismsDiffer>
    <experiments>9</experiments>
</comment>
<comment type="interaction">
    <interactant intactId="EBI-6116822">
        <id>Q8N3L3</id>
    </interactant>
    <interactant intactId="EBI-11958242">
        <id>Q6A163</id>
        <label>KRT39</label>
    </interactant>
    <organismsDiffer>false</organismsDiffer>
    <experiments>3</experiments>
</comment>
<comment type="interaction">
    <interactant intactId="EBI-6116822">
        <id>Q8N3L3</id>
    </interactant>
    <interactant intactId="EBI-702198">
        <id>P02538</id>
        <label>KRT6A</label>
    </interactant>
    <organismsDiffer>false</organismsDiffer>
    <experiments>3</experiments>
</comment>
<comment type="interaction">
    <interactant intactId="EBI-6116822">
        <id>Q8N3L3</id>
    </interactant>
    <interactant intactId="EBI-2949715">
        <id>O95678</id>
        <label>KRT75</label>
    </interactant>
    <organismsDiffer>false</organismsDiffer>
    <experiments>3</experiments>
</comment>
<comment type="interaction">
    <interactant intactId="EBI-6116822">
        <id>Q8N3L3</id>
    </interactant>
    <interactant intactId="EBI-749878">
        <id>Q8IYD9</id>
        <label>LAS2</label>
    </interactant>
    <organismsDiffer>false</organismsDiffer>
    <experiments>3</experiments>
</comment>
<comment type="interaction">
    <interactant intactId="EBI-6116822">
        <id>Q8N3L3</id>
    </interactant>
    <interactant intactId="EBI-744222">
        <id>O60711</id>
        <label>LPXN</label>
    </interactant>
    <organismsDiffer>false</organismsDiffer>
    <experiments>3</experiments>
</comment>
<comment type="interaction">
    <interactant intactId="EBI-6116822">
        <id>Q8N3L3</id>
    </interactant>
    <interactant intactId="EBI-741355">
        <id>Q96LR2</id>
        <label>LURAP1</label>
    </interactant>
    <organismsDiffer>false</organismsDiffer>
    <experiments>8</experiments>
</comment>
<comment type="interaction">
    <interactant intactId="EBI-6116822">
        <id>Q8N3L3</id>
    </interactant>
    <interactant intactId="EBI-1216080">
        <id>Q9Y250</id>
        <label>LZTS1</label>
    </interactant>
    <organismsDiffer>false</organismsDiffer>
    <experiments>3</experiments>
</comment>
<comment type="interaction">
    <interactant intactId="EBI-6116822">
        <id>Q8N3L3</id>
    </interactant>
    <interactant intactId="EBI-741953">
        <id>Q9NS73</id>
        <label>MBIP</label>
    </interactant>
    <organismsDiffer>false</organismsDiffer>
    <experiments>4</experiments>
</comment>
<comment type="interaction">
    <interactant intactId="EBI-6116822">
        <id>Q8N3L3</id>
    </interactant>
    <interactant intactId="EBI-10182361">
        <id>Q9NS73-5</id>
        <label>MBIP</label>
    </interactant>
    <organismsDiffer>false</organismsDiffer>
    <experiments>3</experiments>
</comment>
<comment type="interaction">
    <interactant intactId="EBI-6116822">
        <id>Q8N3L3</id>
    </interactant>
    <interactant intactId="EBI-394607">
        <id>Q9NPJ6</id>
        <label>MED4</label>
    </interactant>
    <organismsDiffer>false</organismsDiffer>
    <experiments>6</experiments>
</comment>
<comment type="interaction">
    <interactant intactId="EBI-6116822">
        <id>Q8N3L3</id>
    </interactant>
    <interactant intactId="EBI-16439278">
        <id>Q6FHY5</id>
        <label>MEOX2</label>
    </interactant>
    <organismsDiffer>false</organismsDiffer>
    <experiments>3</experiments>
</comment>
<comment type="interaction">
    <interactant intactId="EBI-6116822">
        <id>Q8N3L3</id>
    </interactant>
    <interactant intactId="EBI-743811">
        <id>Q8NEH6</id>
        <label>MNS1</label>
    </interactant>
    <organismsDiffer>false</organismsDiffer>
    <experiments>3</experiments>
</comment>
<comment type="interaction">
    <interactant intactId="EBI-6116822">
        <id>Q8N3L3</id>
    </interactant>
    <interactant intactId="EBI-10178578">
        <id>I6L9F6</id>
        <label>NEFL</label>
    </interactant>
    <organismsDiffer>false</organismsDiffer>
    <experiments>3</experiments>
</comment>
<comment type="interaction">
    <interactant intactId="EBI-6116822">
        <id>Q8N3L3</id>
    </interactant>
    <interactant intactId="EBI-1014514">
        <id>P35240-4</id>
        <label>NF2</label>
    </interactant>
    <organismsDiffer>false</organismsDiffer>
    <experiments>3</experiments>
</comment>
<comment type="interaction">
    <interactant intactId="EBI-6116822">
        <id>Q8N3L3</id>
    </interactant>
    <interactant intactId="EBI-372942">
        <id>Q13287</id>
        <label>NMI</label>
    </interactant>
    <organismsDiffer>false</organismsDiffer>
    <experiments>9</experiments>
</comment>
<comment type="interaction">
    <interactant intactId="EBI-6116822">
        <id>Q8N3L3</id>
    </interactant>
    <interactant intactId="EBI-8466445">
        <id>A5D8V7</id>
        <label>ODAD3</label>
    </interactant>
    <organismsDiffer>false</organismsDiffer>
    <experiments>3</experiments>
</comment>
<comment type="interaction">
    <interactant intactId="EBI-6116822">
        <id>Q8N3L3</id>
    </interactant>
    <interactant intactId="EBI-10173824">
        <id>A5D8V7-2</id>
        <label>ODAD3</label>
    </interactant>
    <organismsDiffer>false</organismsDiffer>
    <experiments>3</experiments>
</comment>
<comment type="interaction">
    <interactant intactId="EBI-6116822">
        <id>Q8N3L3</id>
    </interactant>
    <interactant intactId="EBI-1773646">
        <id>Q9BRV8</id>
        <label>SIKE1</label>
    </interactant>
    <organismsDiffer>false</organismsDiffer>
    <experiments>3</experiments>
</comment>
<comment type="interaction">
    <interactant intactId="EBI-6116822">
        <id>Q8N3L3</id>
    </interactant>
    <interactant intactId="EBI-12004298">
        <id>O75971-2</id>
        <label>SNAPC5</label>
    </interactant>
    <organismsDiffer>false</organismsDiffer>
    <experiments>3</experiments>
</comment>
<comment type="interaction">
    <interactant intactId="EBI-6116822">
        <id>Q8N3L3</id>
    </interactant>
    <interactant intactId="EBI-3928516">
        <id>Q9UN79</id>
        <label>SOX13</label>
    </interactant>
    <organismsDiffer>false</organismsDiffer>
    <experiments>3</experiments>
</comment>
<comment type="interaction">
    <interactant intactId="EBI-6116822">
        <id>Q8N3L3</id>
    </interactant>
    <interactant intactId="EBI-725557">
        <id>Q9NZ72</id>
        <label>STMN3</label>
    </interactant>
    <organismsDiffer>false</organismsDiffer>
    <experiments>3</experiments>
</comment>
<comment type="interaction">
    <interactant intactId="EBI-6116822">
        <id>Q8N3L3</id>
    </interactant>
    <interactant intactId="EBI-473249">
        <id>O75528</id>
        <label>TADA3</label>
    </interactant>
    <organismsDiffer>false</organismsDiffer>
    <experiments>3</experiments>
</comment>
<comment type="interaction">
    <interactant intactId="EBI-6116822">
        <id>Q8N3L3</id>
    </interactant>
    <interactant intactId="EBI-749995">
        <id>P56279</id>
        <label>TCL1A</label>
    </interactant>
    <organismsDiffer>false</organismsDiffer>
    <experiments>3</experiments>
</comment>
<comment type="interaction">
    <interactant intactId="EBI-6116822">
        <id>Q8N3L3</id>
    </interactant>
    <interactant intactId="EBI-359793">
        <id>P40222</id>
        <label>TXLNA</label>
    </interactant>
    <organismsDiffer>false</organismsDiffer>
    <experiments>13</experiments>
</comment>
<comment type="interaction">
    <interactant intactId="EBI-6116822">
        <id>Q8N3L3</id>
    </interactant>
    <interactant intactId="EBI-10180829">
        <id>Q7KZS0</id>
        <label>UBE2I</label>
    </interactant>
    <organismsDiffer>false</organismsDiffer>
    <experiments>3</experiments>
</comment>
<comment type="interaction">
    <interactant intactId="EBI-6116822">
        <id>Q8N3L3</id>
    </interactant>
    <interactant intactId="EBI-739895">
        <id>Q8N6Y0</id>
        <label>USHBP1</label>
    </interactant>
    <organismsDiffer>false</organismsDiffer>
    <experiments>6</experiments>
</comment>
<comment type="interaction">
    <interactant intactId="EBI-6116822">
        <id>Q8N3L3</id>
    </interactant>
    <interactant intactId="EBI-473284">
        <id>Q9BVJ6</id>
        <label>UTP14A</label>
    </interactant>
    <organismsDiffer>false</organismsDiffer>
    <experiments>3</experiments>
</comment>
<comment type="interaction">
    <interactant intactId="EBI-6116822">
        <id>Q8N3L3</id>
    </interactant>
    <interactant intactId="EBI-353844">
        <id>P08670</id>
        <label>VIM</label>
    </interactant>
    <organismsDiffer>false</organismsDiffer>
    <experiments>6</experiments>
</comment>
<comment type="interaction">
    <interactant intactId="EBI-6116822">
        <id>Q8N3L3</id>
    </interactant>
    <interactant intactId="EBI-2799833">
        <id>Q8N1B4</id>
        <label>VPS52</label>
    </interactant>
    <organismsDiffer>false</organismsDiffer>
    <experiments>3</experiments>
</comment>
<comment type="interaction">
    <interactant intactId="EBI-6116822">
        <id>Q8N3L3</id>
    </interactant>
    <interactant intactId="EBI-712969">
        <id>Q9Y3C0</id>
        <label>WASHC3</label>
    </interactant>
    <organismsDiffer>false</organismsDiffer>
    <experiments>4</experiments>
</comment>
<comment type="interaction">
    <interactant intactId="EBI-6116822">
        <id>Q8N3L3</id>
    </interactant>
    <interactant intactId="EBI-717634">
        <id>P17024</id>
        <label>ZNF20</label>
    </interactant>
    <organismsDiffer>false</organismsDiffer>
    <experiments>3</experiments>
</comment>
<comment type="tissue specificity">
    <text>Expressed in skeletal muscle.</text>
</comment>
<comment type="similarity">
    <text evidence="7">Belongs to the taxilin family.</text>
</comment>
<comment type="sequence caution" evidence="7">
    <conflict type="erroneous initiation">
        <sequence resource="EMBL-CDS" id="CAD38924"/>
    </conflict>
</comment>
<comment type="sequence caution" evidence="7">
    <conflict type="erroneous initiation">
        <sequence resource="EMBL-CDS" id="CAD91140"/>
    </conflict>
</comment>